<evidence type="ECO:0000305" key="1"/>
<name>H2A1_LEIIN</name>
<proteinExistence type="evidence at transcript level"/>
<keyword id="KW-0158">Chromosome</keyword>
<keyword id="KW-0238">DNA-binding</keyword>
<keyword id="KW-0544">Nucleosome core</keyword>
<keyword id="KW-0539">Nucleus</keyword>
<accession>P27891</accession>
<accession>Q7K8Z7</accession>
<feature type="chain" id="PRO_0000055246" description="Histone H2A.1">
    <location>
        <begin position="1"/>
        <end position="132"/>
    </location>
</feature>
<protein>
    <recommendedName>
        <fullName>Histone H2A.1</fullName>
    </recommendedName>
</protein>
<reference key="1">
    <citation type="journal article" date="1992" name="Eur. J. Biochem.">
        <title>Molecular characterization of a Leishmania donovani infantum antigen identified as histone H2A.</title>
        <authorList>
            <person name="Soto M."/>
            <person name="Requena J.M."/>
            <person name="Gomez L.C."/>
            <person name="Navarrete I."/>
            <person name="Alonso C."/>
        </authorList>
    </citation>
    <scope>NUCLEOTIDE SEQUENCE [MRNA]</scope>
    <source>
        <strain>MHOM/FR/78/LEM 75</strain>
    </source>
</reference>
<reference key="2">
    <citation type="journal article" date="1991" name="Nucleic Acids Res.">
        <title>The mRNA coding for the nucleosomal protein H2A of Leishmania is polyadenylated and has stem-loops at the 3' end.</title>
        <authorList>
            <person name="Soto M."/>
            <person name="Requena J.M."/>
            <person name="Jiminez-Ruiz A."/>
            <person name="Alonso C."/>
        </authorList>
    </citation>
    <scope>NUCLEOTIDE SEQUENCE [MRNA]</scope>
    <source>
        <strain>MHOM/FR/78/LEM 75</strain>
    </source>
</reference>
<reference key="3">
    <citation type="journal article" date="2003" name="Parasitology">
        <title>Leishmania infantum possesses a complex family of histone H2A genes: struc tural characterization and analyisis of expression.</title>
        <authorList>
            <person name="Soto M."/>
            <person name="Quijada L."/>
            <person name="Larreta R."/>
            <person name="Iborra S."/>
            <person name="Alonso C."/>
            <person name="Requena J.M."/>
        </authorList>
    </citation>
    <scope>NUCLEOTIDE SEQUENCE [GENOMIC DNA]</scope>
    <source>
        <strain>MHOM/FR/78/LEM 75</strain>
    </source>
</reference>
<sequence>MATPRSAKKAVRKSGSKSAKCGLIFPVGRVGGMMRRGQYARRIGASGAVYLAAVLEYLTAELLELSVKAAAQSGKKRCRLNPRTVMLAARHDDDIGTLLKNVTLSHSGVVPNISKAMAKKKGGKKGKATPSA</sequence>
<comment type="function">
    <text>Core component of nucleosome. Nucleosomes wrap and compact DNA into chromatin, limiting DNA accessibility to the cellular machineries which require DNA as a template. Histones thereby play a central role in transcription regulation, DNA repair, DNA replication and chromosomal stability. DNA accessibility is regulated via a complex set of post-translational modifications of histones, also called histone code, and nucleosome remodeling.</text>
</comment>
<comment type="subunit">
    <text>The nucleosome is a histone octamer containing two molecules each of H2A, H2B, H3 and H4 assembled in one H3-H4 heterotetramer and two H2A-H2B heterodimers. The octamer wraps approximately 147 bp of DNA.</text>
</comment>
<comment type="subcellular location">
    <subcellularLocation>
        <location>Nucleus</location>
    </subcellularLocation>
    <subcellularLocation>
        <location>Chromosome</location>
    </subcellularLocation>
</comment>
<comment type="similarity">
    <text evidence="1">Belongs to the histone H2A family.</text>
</comment>
<organism>
    <name type="scientific">Leishmania infantum</name>
    <dbReference type="NCBI Taxonomy" id="5671"/>
    <lineage>
        <taxon>Eukaryota</taxon>
        <taxon>Discoba</taxon>
        <taxon>Euglenozoa</taxon>
        <taxon>Kinetoplastea</taxon>
        <taxon>Metakinetoplastina</taxon>
        <taxon>Trypanosomatida</taxon>
        <taxon>Trypanosomatidae</taxon>
        <taxon>Leishmaniinae</taxon>
        <taxon>Leishmania</taxon>
    </lineage>
</organism>
<dbReference type="EMBL" id="X60054">
    <property type="protein sequence ID" value="CAA42652.1"/>
    <property type="molecule type" value="mRNA"/>
</dbReference>
<dbReference type="EMBL" id="AJ419627">
    <property type="protein sequence ID" value="CAD11895.1"/>
    <property type="molecule type" value="Genomic_DNA"/>
</dbReference>
<dbReference type="PIR" id="S22303">
    <property type="entry name" value="S22303"/>
</dbReference>
<dbReference type="SMR" id="P27891"/>
<dbReference type="VEuPathDB" id="TriTrypDB:LINF_210016800"/>
<dbReference type="eggNOG" id="KOG1756">
    <property type="taxonomic scope" value="Eukaryota"/>
</dbReference>
<dbReference type="GO" id="GO:0000786">
    <property type="term" value="C:nucleosome"/>
    <property type="evidence" value="ECO:0007669"/>
    <property type="project" value="UniProtKB-KW"/>
</dbReference>
<dbReference type="GO" id="GO:0005634">
    <property type="term" value="C:nucleus"/>
    <property type="evidence" value="ECO:0007669"/>
    <property type="project" value="UniProtKB-SubCell"/>
</dbReference>
<dbReference type="GO" id="GO:0003677">
    <property type="term" value="F:DNA binding"/>
    <property type="evidence" value="ECO:0007669"/>
    <property type="project" value="UniProtKB-KW"/>
</dbReference>
<dbReference type="GO" id="GO:0046982">
    <property type="term" value="F:protein heterodimerization activity"/>
    <property type="evidence" value="ECO:0007669"/>
    <property type="project" value="InterPro"/>
</dbReference>
<dbReference type="GO" id="GO:0030527">
    <property type="term" value="F:structural constituent of chromatin"/>
    <property type="evidence" value="ECO:0007669"/>
    <property type="project" value="InterPro"/>
</dbReference>
<dbReference type="CDD" id="cd00074">
    <property type="entry name" value="HFD_H2A"/>
    <property type="match status" value="1"/>
</dbReference>
<dbReference type="FunFam" id="1.10.20.10:FF:000086">
    <property type="entry name" value="Histone H2A"/>
    <property type="match status" value="1"/>
</dbReference>
<dbReference type="Gene3D" id="1.10.20.10">
    <property type="entry name" value="Histone, subunit A"/>
    <property type="match status" value="1"/>
</dbReference>
<dbReference type="InterPro" id="IPR009072">
    <property type="entry name" value="Histone-fold"/>
</dbReference>
<dbReference type="InterPro" id="IPR002119">
    <property type="entry name" value="Histone_H2A"/>
</dbReference>
<dbReference type="InterPro" id="IPR007125">
    <property type="entry name" value="Histone_H2A/H2B/H3"/>
</dbReference>
<dbReference type="InterPro" id="IPR032454">
    <property type="entry name" value="Histone_H2A_C"/>
</dbReference>
<dbReference type="InterPro" id="IPR032458">
    <property type="entry name" value="Histone_H2A_CS"/>
</dbReference>
<dbReference type="PANTHER" id="PTHR23430">
    <property type="entry name" value="HISTONE H2A"/>
    <property type="match status" value="1"/>
</dbReference>
<dbReference type="Pfam" id="PF00125">
    <property type="entry name" value="Histone"/>
    <property type="match status" value="1"/>
</dbReference>
<dbReference type="Pfam" id="PF16211">
    <property type="entry name" value="Histone_H2A_C"/>
    <property type="match status" value="1"/>
</dbReference>
<dbReference type="PRINTS" id="PR00620">
    <property type="entry name" value="HISTONEH2A"/>
</dbReference>
<dbReference type="SMART" id="SM00414">
    <property type="entry name" value="H2A"/>
    <property type="match status" value="1"/>
</dbReference>
<dbReference type="SUPFAM" id="SSF47113">
    <property type="entry name" value="Histone-fold"/>
    <property type="match status" value="1"/>
</dbReference>
<dbReference type="PROSITE" id="PS00046">
    <property type="entry name" value="HISTONE_H2A"/>
    <property type="match status" value="1"/>
</dbReference>